<keyword id="KW-0029">Amino-acid transport</keyword>
<keyword id="KW-1003">Cell membrane</keyword>
<keyword id="KW-0406">Ion transport</keyword>
<keyword id="KW-0472">Membrane</keyword>
<keyword id="KW-0915">Sodium</keyword>
<keyword id="KW-0739">Sodium transport</keyword>
<keyword id="KW-0769">Symport</keyword>
<keyword id="KW-0812">Transmembrane</keyword>
<keyword id="KW-1133">Transmembrane helix</keyword>
<keyword id="KW-0813">Transport</keyword>
<name>PUTP_STAAC</name>
<sequence length="512" mass="55976">MLTMGTALSQQVDANWQTYIMIAVYFLILIVIGFYGYKQATGNLSEYMLGGRSIGPYITALSAGASDMSGWMIMGLPGSVYSTGLSAMWITIGLTLGAYINYFVVAPRLRVYTELAGDAITLPDFFKNRLNDKNNVLKIISGLIIVVFFTLYTHSGFVSGGKLFESAFGLDYHFGLILVAFIVIFYTFFGGYLAVSITDFFQGVIMLIAMVMVPIVAMMNLNGWGTFHDVAAMKPTNLNLFKGLSFIGIISLFSWGLGYFGQPHIIVRFMSIKSHKMLPKARRLGISWMAVGLLGAVAVGLTGIAFVPAYHIKLEDPETLFIVMSQVLFHPLVGGFLLAAILAAIMSTISSQLLVTSSSLTEDFYKLIRGEEKAKTHQKEFVMIGRLSVLVVAIVAIAIAWNPNDTILNLVGNAWAGFGASFSPLVLFALYWKGLTRAGAVSGMVSGALVVIVWIAWIKPLAHINEIFGLYEIIPGFIVSVIVTYVVSKLTKKPGAFVETDLNKVRDIVREK</sequence>
<feature type="chain" id="PRO_0000364093" description="Sodium/proline symporter">
    <location>
        <begin position="1"/>
        <end position="512"/>
    </location>
</feature>
<feature type="transmembrane region" description="Helical" evidence="3">
    <location>
        <begin position="16"/>
        <end position="36"/>
    </location>
</feature>
<feature type="transmembrane region" description="Helical" evidence="3">
    <location>
        <begin position="54"/>
        <end position="74"/>
    </location>
</feature>
<feature type="transmembrane region" description="Helical" evidence="3">
    <location>
        <begin position="85"/>
        <end position="105"/>
    </location>
</feature>
<feature type="transmembrane region" description="Helical" evidence="3">
    <location>
        <begin position="139"/>
        <end position="159"/>
    </location>
</feature>
<feature type="transmembrane region" description="Helical" evidence="3">
    <location>
        <begin position="174"/>
        <end position="194"/>
    </location>
</feature>
<feature type="transmembrane region" description="Helical" evidence="3">
    <location>
        <begin position="200"/>
        <end position="220"/>
    </location>
</feature>
<feature type="transmembrane region" description="Helical" evidence="3">
    <location>
        <begin position="240"/>
        <end position="260"/>
    </location>
</feature>
<feature type="transmembrane region" description="Helical" evidence="3">
    <location>
        <begin position="286"/>
        <end position="306"/>
    </location>
</feature>
<feature type="transmembrane region" description="Helical" evidence="3">
    <location>
        <begin position="327"/>
        <end position="347"/>
    </location>
</feature>
<feature type="transmembrane region" description="Helical" evidence="3">
    <location>
        <begin position="381"/>
        <end position="401"/>
    </location>
</feature>
<feature type="transmembrane region" description="Helical" evidence="3">
    <location>
        <begin position="410"/>
        <end position="430"/>
    </location>
</feature>
<feature type="transmembrane region" description="Helical" evidence="3">
    <location>
        <begin position="438"/>
        <end position="458"/>
    </location>
</feature>
<feature type="transmembrane region" description="Helical" evidence="3">
    <location>
        <begin position="467"/>
        <end position="487"/>
    </location>
</feature>
<evidence type="ECO:0000250" key="1">
    <source>
        <dbReference type="UniProtKB" id="P07117"/>
    </source>
</evidence>
<evidence type="ECO:0000250" key="2">
    <source>
        <dbReference type="UniProtKB" id="Q2FWY7"/>
    </source>
</evidence>
<evidence type="ECO:0000255" key="3"/>
<evidence type="ECO:0000305" key="4"/>
<gene>
    <name type="primary">putP</name>
    <name type="ordered locus">SACOL1963</name>
</gene>
<reference key="1">
    <citation type="journal article" date="2005" name="J. Bacteriol.">
        <title>Insights on evolution of virulence and resistance from the complete genome analysis of an early methicillin-resistant Staphylococcus aureus strain and a biofilm-producing methicillin-resistant Staphylococcus epidermidis strain.</title>
        <authorList>
            <person name="Gill S.R."/>
            <person name="Fouts D.E."/>
            <person name="Archer G.L."/>
            <person name="Mongodin E.F."/>
            <person name="DeBoy R.T."/>
            <person name="Ravel J."/>
            <person name="Paulsen I.T."/>
            <person name="Kolonay J.F."/>
            <person name="Brinkac L.M."/>
            <person name="Beanan M.J."/>
            <person name="Dodson R.J."/>
            <person name="Daugherty S.C."/>
            <person name="Madupu R."/>
            <person name="Angiuoli S.V."/>
            <person name="Durkin A.S."/>
            <person name="Haft D.H."/>
            <person name="Vamathevan J.J."/>
            <person name="Khouri H."/>
            <person name="Utterback T.R."/>
            <person name="Lee C."/>
            <person name="Dimitrov G."/>
            <person name="Jiang L."/>
            <person name="Qin H."/>
            <person name="Weidman J."/>
            <person name="Tran K."/>
            <person name="Kang K.H."/>
            <person name="Hance I.R."/>
            <person name="Nelson K.E."/>
            <person name="Fraser C.M."/>
        </authorList>
    </citation>
    <scope>NUCLEOTIDE SEQUENCE [LARGE SCALE GENOMIC DNA]</scope>
    <source>
        <strain>COL</strain>
    </source>
</reference>
<accession>Q5HEM0</accession>
<proteinExistence type="inferred from homology"/>
<comment type="function">
    <text evidence="1 2">Catalyzes the sodium-dependent uptake of extracellular L-proline (By similarity). Since most S.aureus strains are L-proline auxotrophs, this transporter may aid the bacterial persistence during an infection of tissues with low proline concentrations (By similarity).</text>
</comment>
<comment type="catalytic activity">
    <reaction evidence="1">
        <text>L-proline(in) + Na(+)(in) = L-proline(out) + Na(+)(out)</text>
        <dbReference type="Rhea" id="RHEA:28967"/>
        <dbReference type="ChEBI" id="CHEBI:29101"/>
        <dbReference type="ChEBI" id="CHEBI:60039"/>
    </reaction>
</comment>
<comment type="subcellular location">
    <subcellularLocation>
        <location evidence="4">Cell membrane</location>
        <topology evidence="3">Multi-pass membrane protein</topology>
    </subcellularLocation>
</comment>
<comment type="similarity">
    <text evidence="4">Belongs to the sodium:solute symporter (SSF) (TC 2.A.21) family.</text>
</comment>
<dbReference type="EMBL" id="CP000046">
    <property type="protein sequence ID" value="AAW38403.1"/>
    <property type="molecule type" value="Genomic_DNA"/>
</dbReference>
<dbReference type="RefSeq" id="WP_000957020.1">
    <property type="nucleotide sequence ID" value="NZ_JBGOFO010000006.1"/>
</dbReference>
<dbReference type="SMR" id="Q5HEM0"/>
<dbReference type="KEGG" id="sac:SACOL1963"/>
<dbReference type="HOGENOM" id="CLU_018808_15_2_9"/>
<dbReference type="Proteomes" id="UP000000530">
    <property type="component" value="Chromosome"/>
</dbReference>
<dbReference type="GO" id="GO:0005886">
    <property type="term" value="C:plasma membrane"/>
    <property type="evidence" value="ECO:0007669"/>
    <property type="project" value="UniProtKB-SubCell"/>
</dbReference>
<dbReference type="GO" id="GO:0015193">
    <property type="term" value="F:L-proline transmembrane transporter activity"/>
    <property type="evidence" value="ECO:0007669"/>
    <property type="project" value="TreeGrafter"/>
</dbReference>
<dbReference type="GO" id="GO:0005298">
    <property type="term" value="F:proline:sodium symporter activity"/>
    <property type="evidence" value="ECO:0007669"/>
    <property type="project" value="InterPro"/>
</dbReference>
<dbReference type="GO" id="GO:0031402">
    <property type="term" value="F:sodium ion binding"/>
    <property type="evidence" value="ECO:0007669"/>
    <property type="project" value="InterPro"/>
</dbReference>
<dbReference type="GO" id="GO:0015824">
    <property type="term" value="P:proline transport"/>
    <property type="evidence" value="ECO:0007669"/>
    <property type="project" value="InterPro"/>
</dbReference>
<dbReference type="CDD" id="cd11475">
    <property type="entry name" value="SLC5sbd_PutP"/>
    <property type="match status" value="1"/>
</dbReference>
<dbReference type="FunFam" id="1.20.1730.10:FF:000002">
    <property type="entry name" value="Sodium/proline symporter"/>
    <property type="match status" value="1"/>
</dbReference>
<dbReference type="Gene3D" id="1.20.1730.10">
    <property type="entry name" value="Sodium/glucose cotransporter"/>
    <property type="match status" value="1"/>
</dbReference>
<dbReference type="InterPro" id="IPR038377">
    <property type="entry name" value="Na/Glc_symporter_sf"/>
</dbReference>
<dbReference type="InterPro" id="IPR011851">
    <property type="entry name" value="Na/Pro_symporter"/>
</dbReference>
<dbReference type="InterPro" id="IPR001734">
    <property type="entry name" value="Na/solute_symporter"/>
</dbReference>
<dbReference type="InterPro" id="IPR050277">
    <property type="entry name" value="Sodium:Solute_Symporter"/>
</dbReference>
<dbReference type="NCBIfam" id="TIGR02121">
    <property type="entry name" value="Na_Pro_sym"/>
    <property type="match status" value="1"/>
</dbReference>
<dbReference type="NCBIfam" id="TIGR00813">
    <property type="entry name" value="sss"/>
    <property type="match status" value="1"/>
</dbReference>
<dbReference type="PANTHER" id="PTHR48086">
    <property type="entry name" value="SODIUM/PROLINE SYMPORTER-RELATED"/>
    <property type="match status" value="1"/>
</dbReference>
<dbReference type="PANTHER" id="PTHR48086:SF3">
    <property type="entry name" value="SODIUM_PROLINE SYMPORTER"/>
    <property type="match status" value="1"/>
</dbReference>
<dbReference type="Pfam" id="PF00474">
    <property type="entry name" value="SSF"/>
    <property type="match status" value="1"/>
</dbReference>
<dbReference type="PROSITE" id="PS50283">
    <property type="entry name" value="NA_SOLUT_SYMP_3"/>
    <property type="match status" value="1"/>
</dbReference>
<organism>
    <name type="scientific">Staphylococcus aureus (strain COL)</name>
    <dbReference type="NCBI Taxonomy" id="93062"/>
    <lineage>
        <taxon>Bacteria</taxon>
        <taxon>Bacillati</taxon>
        <taxon>Bacillota</taxon>
        <taxon>Bacilli</taxon>
        <taxon>Bacillales</taxon>
        <taxon>Staphylococcaceae</taxon>
        <taxon>Staphylococcus</taxon>
    </lineage>
</organism>
<protein>
    <recommendedName>
        <fullName>Sodium/proline symporter</fullName>
    </recommendedName>
    <alternativeName>
        <fullName>Proline permease</fullName>
    </alternativeName>
</protein>